<evidence type="ECO:0000255" key="1">
    <source>
        <dbReference type="HAMAP-Rule" id="MF_03147"/>
    </source>
</evidence>
<evidence type="ECO:0000256" key="2">
    <source>
        <dbReference type="SAM" id="MobiDB-lite"/>
    </source>
</evidence>
<name>GATB_PARBD</name>
<protein>
    <recommendedName>
        <fullName evidence="1">Glutamyl-tRNA(Gln) amidotransferase subunit B, mitochondrial</fullName>
        <shortName evidence="1">Glu-AdT subunit B</shortName>
        <ecNumber evidence="1">6.3.5.-</ecNumber>
    </recommendedName>
</protein>
<gene>
    <name type="ORF">PADG_00638</name>
</gene>
<proteinExistence type="inferred from homology"/>
<reference key="1">
    <citation type="journal article" date="2011" name="PLoS Genet.">
        <title>Comparative genomic analysis of human fungal pathogens causing paracoccidioidomycosis.</title>
        <authorList>
            <person name="Desjardins C.A."/>
            <person name="Champion M.D."/>
            <person name="Holder J.W."/>
            <person name="Muszewska A."/>
            <person name="Goldberg J."/>
            <person name="Bailao A.M."/>
            <person name="Brigido M.M."/>
            <person name="Ferreira M.E."/>
            <person name="Garcia A.M."/>
            <person name="Grynberg M."/>
            <person name="Gujja S."/>
            <person name="Heiman D.I."/>
            <person name="Henn M.R."/>
            <person name="Kodira C.D."/>
            <person name="Leon-Narvaez H."/>
            <person name="Longo L.V.G."/>
            <person name="Ma L.-J."/>
            <person name="Malavazi I."/>
            <person name="Matsuo A.L."/>
            <person name="Morais F.V."/>
            <person name="Pereira M."/>
            <person name="Rodriguez-Brito S."/>
            <person name="Sakthikumar S."/>
            <person name="Salem-Izacc S.M."/>
            <person name="Sykes S.M."/>
            <person name="Teixeira M.M."/>
            <person name="Vallejo M.C."/>
            <person name="Walter M.E."/>
            <person name="Yandava C."/>
            <person name="Young S."/>
            <person name="Zeng Q."/>
            <person name="Zucker J."/>
            <person name="Felipe M.S."/>
            <person name="Goldman G.H."/>
            <person name="Haas B.J."/>
            <person name="McEwen J.G."/>
            <person name="Nino-Vega G."/>
            <person name="Puccia R."/>
            <person name="San-Blas G."/>
            <person name="Soares C.M."/>
            <person name="Birren B.W."/>
            <person name="Cuomo C.A."/>
        </authorList>
    </citation>
    <scope>NUCLEOTIDE SEQUENCE [LARGE SCALE GENOMIC DNA]</scope>
    <source>
        <strain>Pb18</strain>
    </source>
</reference>
<comment type="function">
    <text evidence="1">Allows the formation of correctly charged Gln-tRNA(Gln) through the transamidation of misacylated Glu-tRNA(Gln) in the mitochondria. The reaction takes place in the presence of glutamine and ATP through an activated gamma-phospho-Glu-tRNA(Gln).</text>
</comment>
<comment type="catalytic activity">
    <reaction evidence="1">
        <text>L-glutamyl-tRNA(Gln) + L-glutamine + ATP + H2O = L-glutaminyl-tRNA(Gln) + L-glutamate + ADP + phosphate + H(+)</text>
        <dbReference type="Rhea" id="RHEA:17521"/>
        <dbReference type="Rhea" id="RHEA-COMP:9681"/>
        <dbReference type="Rhea" id="RHEA-COMP:9684"/>
        <dbReference type="ChEBI" id="CHEBI:15377"/>
        <dbReference type="ChEBI" id="CHEBI:15378"/>
        <dbReference type="ChEBI" id="CHEBI:29985"/>
        <dbReference type="ChEBI" id="CHEBI:30616"/>
        <dbReference type="ChEBI" id="CHEBI:43474"/>
        <dbReference type="ChEBI" id="CHEBI:58359"/>
        <dbReference type="ChEBI" id="CHEBI:78520"/>
        <dbReference type="ChEBI" id="CHEBI:78521"/>
        <dbReference type="ChEBI" id="CHEBI:456216"/>
    </reaction>
</comment>
<comment type="subunit">
    <text evidence="1">Subunit of the heterotrimeric GatCAB amidotransferase (AdT) complex, composed of A, B and C subunits.</text>
</comment>
<comment type="subcellular location">
    <subcellularLocation>
        <location evidence="1">Mitochondrion</location>
    </subcellularLocation>
</comment>
<comment type="miscellaneous">
    <text evidence="1">This protein may be expected to contain an N-terminal transit peptide but none has been predicted.</text>
</comment>
<comment type="similarity">
    <text evidence="1">Belongs to the GatB/GatE family. GatB subfamily.</text>
</comment>
<dbReference type="EC" id="6.3.5.-" evidence="1"/>
<dbReference type="EMBL" id="KN275957">
    <property type="protein sequence ID" value="EEH44349.2"/>
    <property type="molecule type" value="Genomic_DNA"/>
</dbReference>
<dbReference type="RefSeq" id="XP_010755914.1">
    <property type="nucleotide sequence ID" value="XM_010757612.1"/>
</dbReference>
<dbReference type="SMR" id="C1G198"/>
<dbReference type="FunCoup" id="C1G198">
    <property type="interactions" value="343"/>
</dbReference>
<dbReference type="STRING" id="502780.C1G198"/>
<dbReference type="GeneID" id="22580447"/>
<dbReference type="KEGG" id="pbn:PADG_00638"/>
<dbReference type="VEuPathDB" id="FungiDB:PADG_00638"/>
<dbReference type="eggNOG" id="KOG2438">
    <property type="taxonomic scope" value="Eukaryota"/>
</dbReference>
<dbReference type="HOGENOM" id="CLU_019240_4_1_1"/>
<dbReference type="InParanoid" id="C1G198"/>
<dbReference type="OMA" id="ARKWWMG"/>
<dbReference type="OrthoDB" id="33280at33183"/>
<dbReference type="Proteomes" id="UP000001628">
    <property type="component" value="Unassembled WGS sequence"/>
</dbReference>
<dbReference type="GO" id="GO:0030956">
    <property type="term" value="C:glutamyl-tRNA(Gln) amidotransferase complex"/>
    <property type="evidence" value="ECO:0007669"/>
    <property type="project" value="UniProtKB-UniRule"/>
</dbReference>
<dbReference type="GO" id="GO:0005739">
    <property type="term" value="C:mitochondrion"/>
    <property type="evidence" value="ECO:0007669"/>
    <property type="project" value="UniProtKB-SubCell"/>
</dbReference>
<dbReference type="GO" id="GO:0005524">
    <property type="term" value="F:ATP binding"/>
    <property type="evidence" value="ECO:0007669"/>
    <property type="project" value="UniProtKB-KW"/>
</dbReference>
<dbReference type="GO" id="GO:0050567">
    <property type="term" value="F:glutaminyl-tRNA synthase (glutamine-hydrolyzing) activity"/>
    <property type="evidence" value="ECO:0007669"/>
    <property type="project" value="UniProtKB-UniRule"/>
</dbReference>
<dbReference type="GO" id="GO:0070681">
    <property type="term" value="P:glutaminyl-tRNAGln biosynthesis via transamidation"/>
    <property type="evidence" value="ECO:0007669"/>
    <property type="project" value="UniProtKB-UniRule"/>
</dbReference>
<dbReference type="GO" id="GO:0032543">
    <property type="term" value="P:mitochondrial translation"/>
    <property type="evidence" value="ECO:0007669"/>
    <property type="project" value="UniProtKB-UniRule"/>
</dbReference>
<dbReference type="HAMAP" id="MF_00121">
    <property type="entry name" value="GatB"/>
    <property type="match status" value="1"/>
</dbReference>
<dbReference type="InterPro" id="IPR017959">
    <property type="entry name" value="Asn/Gln-tRNA_amidoTrfase_suB/E"/>
</dbReference>
<dbReference type="InterPro" id="IPR006075">
    <property type="entry name" value="Asn/Gln-tRNA_Trfase_suB/E_cat"/>
</dbReference>
<dbReference type="InterPro" id="IPR018027">
    <property type="entry name" value="Asn/Gln_amidotransferase"/>
</dbReference>
<dbReference type="InterPro" id="IPR003789">
    <property type="entry name" value="Asn/Gln_tRNA_amidoTrase-B-like"/>
</dbReference>
<dbReference type="InterPro" id="IPR004413">
    <property type="entry name" value="GatB"/>
</dbReference>
<dbReference type="InterPro" id="IPR017958">
    <property type="entry name" value="Gln-tRNA_amidoTrfase_suB_CS"/>
</dbReference>
<dbReference type="InterPro" id="IPR014746">
    <property type="entry name" value="Gln_synth/guanido_kin_cat_dom"/>
</dbReference>
<dbReference type="NCBIfam" id="TIGR00133">
    <property type="entry name" value="gatB"/>
    <property type="match status" value="1"/>
</dbReference>
<dbReference type="NCBIfam" id="NF004012">
    <property type="entry name" value="PRK05477.1-2"/>
    <property type="match status" value="1"/>
</dbReference>
<dbReference type="PANTHER" id="PTHR11659">
    <property type="entry name" value="GLUTAMYL-TRNA GLN AMIDOTRANSFERASE SUBUNIT B MITOCHONDRIAL AND PROKARYOTIC PET112-RELATED"/>
    <property type="match status" value="1"/>
</dbReference>
<dbReference type="PANTHER" id="PTHR11659:SF0">
    <property type="entry name" value="GLUTAMYL-TRNA(GLN) AMIDOTRANSFERASE SUBUNIT B, MITOCHONDRIAL"/>
    <property type="match status" value="1"/>
</dbReference>
<dbReference type="Pfam" id="PF02934">
    <property type="entry name" value="GatB_N"/>
    <property type="match status" value="1"/>
</dbReference>
<dbReference type="Pfam" id="PF02637">
    <property type="entry name" value="GatB_Yqey"/>
    <property type="match status" value="1"/>
</dbReference>
<dbReference type="SMART" id="SM00845">
    <property type="entry name" value="GatB_Yqey"/>
    <property type="match status" value="1"/>
</dbReference>
<dbReference type="SUPFAM" id="SSF89095">
    <property type="entry name" value="GatB/YqeY motif"/>
    <property type="match status" value="1"/>
</dbReference>
<dbReference type="SUPFAM" id="SSF55931">
    <property type="entry name" value="Glutamine synthetase/guanido kinase"/>
    <property type="match status" value="1"/>
</dbReference>
<dbReference type="PROSITE" id="PS01234">
    <property type="entry name" value="GATB"/>
    <property type="match status" value="1"/>
</dbReference>
<sequence>MIRQCLSRRAACPCYRIAAGGTELTGCLYPQSSRISRRGRDWSSTSRRAIDTQTSGASNGADYVPLRKQLKEQAREGRAATRKGEVSPPEHEDWELTVGIEIHAQLDTDTKLFSRASAAIDDVPNSNVALFDIALPGSQPLFQPATLIPALRAAIALNCDVQRVSRFDRKHYFYQDQPAGYQITQYYEPYAKNGSIWLGPHDGIAKEDGVGVKIGIKQIQLEQDTAKSQELPSSTYLLDFNRVSRPLIEIITLPQIHSPATAAACVRKIQTILQSVGAVTTGMEMGGLRADVNVSVRKRSEGVGDHQYHGITGLGQRTEIKNLSSFKAVENAIIAERDRQIAVLRAGGAIEGETRGWTLGSTETRKLRGKEGEVDYRYMPDPDLGPVIIGIDVFFELKAKLPVLPDALLQSLVQDPKYGLSTDDAKALIELDDGDRLDYYKDAVDILITLQKDLSDDFSGGGKVVGNWVLHELGGLLTKSNLHWDSERVPAQSLAEIINLLSRNKITGSTAKSLLAMVFDGDKRSISQIVEDENLLLQSLSREEYIALAEEVMRQNPKMVMEICEKRQLGKIGWLVGQIKQIGDRNRVEAQKAEEILRELILK</sequence>
<keyword id="KW-0067">ATP-binding</keyword>
<keyword id="KW-0436">Ligase</keyword>
<keyword id="KW-0496">Mitochondrion</keyword>
<keyword id="KW-0547">Nucleotide-binding</keyword>
<keyword id="KW-0648">Protein biosynthesis</keyword>
<keyword id="KW-1185">Reference proteome</keyword>
<accession>C1G198</accession>
<feature type="chain" id="PRO_0000413268" description="Glutamyl-tRNA(Gln) amidotransferase subunit B, mitochondrial">
    <location>
        <begin position="1"/>
        <end position="603"/>
    </location>
</feature>
<feature type="region of interest" description="Disordered" evidence="2">
    <location>
        <begin position="38"/>
        <end position="61"/>
    </location>
</feature>
<feature type="region of interest" description="Disordered" evidence="2">
    <location>
        <begin position="72"/>
        <end position="91"/>
    </location>
</feature>
<feature type="compositionally biased region" description="Polar residues" evidence="2">
    <location>
        <begin position="42"/>
        <end position="58"/>
    </location>
</feature>
<organism>
    <name type="scientific">Paracoccidioides brasiliensis (strain Pb18)</name>
    <dbReference type="NCBI Taxonomy" id="502780"/>
    <lineage>
        <taxon>Eukaryota</taxon>
        <taxon>Fungi</taxon>
        <taxon>Dikarya</taxon>
        <taxon>Ascomycota</taxon>
        <taxon>Pezizomycotina</taxon>
        <taxon>Eurotiomycetes</taxon>
        <taxon>Eurotiomycetidae</taxon>
        <taxon>Onygenales</taxon>
        <taxon>Ajellomycetaceae</taxon>
        <taxon>Paracoccidioides</taxon>
    </lineage>
</organism>